<comment type="function">
    <text evidence="1 3">Subunit 8, of the mitochondrial membrane ATP synthase complex (F(1)F(0) ATP synthase or Complex V) that produces ATP from ADP in the presence of a proton gradient across the membrane which is generated by electron transport complexes of the respiratory chain. ATP synthase complex consist of a soluble F(1) head domain - the catalytic core - and a membrane F(1) domain - the membrane proton channel. These two domains are linked by a central stalk rotating inside the F(1) region and a stationary peripheral stalk. During catalysis, ATP synthesis in the catalytic domain of F(1) is coupled via a rotary mechanism of the central stalk subunits to proton translocation (By similarity). In vivo, can only synthesize ATP although its ATP hydrolase activity can be activated artificially in vitro (By similarity). Part of the complex F(0) domain (By similarity).</text>
</comment>
<comment type="subunit">
    <text evidence="1">Component of the ATP synthase complex composed at least of ATP5F1A/subunit alpha, ATP5F1B/subunit beta, ATP5MC1/subunit c (homooctomer), MT-ATP6/subunit a, MT-ATP8/subunit 8, ATP5ME/subunit e, ATP5MF/subunit f, ATP5MG/subunit g, ATP5MK/subunit k, ATP5MJ/subunit j, ATP5F1C/subunit gamma, ATP5F1D/subunit delta, ATP5F1E/subunit epsilon, ATP5PF/subunit F6, ATP5PB/subunit b, ATP5PD/subunit d, ATP5PO/subunit OSCP. ATP synthase complex consists of a soluble F(1) head domain (subunits alpha(3) and beta(3)) - the catalytic core - and a membrane F(0) domain - the membrane proton channel (subunits c, a, 8, e, f, g, k and j). These two domains are linked by a central stalk (subunits gamma, delta, and epsilon) rotating inside the F1 region and a stationary peripheral stalk (subunits F6, b, d, and OSCP). Interacts with PRICKLE3.</text>
</comment>
<comment type="subcellular location">
    <subcellularLocation>
        <location>Mitochondrion membrane</location>
        <topology>Single-pass membrane protein</topology>
    </subcellularLocation>
</comment>
<comment type="similarity">
    <text evidence="5">Belongs to the ATPase protein 8 family.</text>
</comment>
<organism>
    <name type="scientific">Loxodonta africana</name>
    <name type="common">African elephant</name>
    <dbReference type="NCBI Taxonomy" id="9785"/>
    <lineage>
        <taxon>Eukaryota</taxon>
        <taxon>Metazoa</taxon>
        <taxon>Chordata</taxon>
        <taxon>Craniata</taxon>
        <taxon>Vertebrata</taxon>
        <taxon>Euteleostomi</taxon>
        <taxon>Mammalia</taxon>
        <taxon>Eutheria</taxon>
        <taxon>Afrotheria</taxon>
        <taxon>Proboscidea</taxon>
        <taxon>Elephantidae</taxon>
        <taxon>Loxodonta</taxon>
    </lineage>
</organism>
<gene>
    <name evidence="1" type="primary">MT-ATP8</name>
    <name type="synonym">ATP8</name>
    <name type="synonym">ATPASE8</name>
    <name type="synonym">MTATP8</name>
</gene>
<protein>
    <recommendedName>
        <fullName evidence="1">ATP synthase F(0) complex subunit 8</fullName>
    </recommendedName>
    <alternativeName>
        <fullName>A6L</fullName>
    </alternativeName>
    <alternativeName>
        <fullName>F-ATPase subunit 8</fullName>
    </alternativeName>
</protein>
<evidence type="ECO:0000250" key="1">
    <source>
        <dbReference type="UniProtKB" id="P03928"/>
    </source>
</evidence>
<evidence type="ECO:0000250" key="2">
    <source>
        <dbReference type="UniProtKB" id="P03930"/>
    </source>
</evidence>
<evidence type="ECO:0000250" key="3">
    <source>
        <dbReference type="UniProtKB" id="P19483"/>
    </source>
</evidence>
<evidence type="ECO:0000255" key="4"/>
<evidence type="ECO:0000305" key="5"/>
<dbReference type="EMBL" id="AJ224821">
    <property type="protein sequence ID" value="CAA12142.1"/>
    <property type="molecule type" value="Genomic_DNA"/>
</dbReference>
<dbReference type="EMBL" id="DQ316069">
    <property type="protein sequence ID" value="ABC17908.1"/>
    <property type="molecule type" value="Genomic_DNA"/>
</dbReference>
<dbReference type="PIR" id="T45554">
    <property type="entry name" value="T45554"/>
</dbReference>
<dbReference type="RefSeq" id="NP_009283.1">
    <property type="nucleotide sequence ID" value="NC_000934.1"/>
</dbReference>
<dbReference type="STRING" id="9785.ENSLAFP00000029495"/>
<dbReference type="Ensembl" id="ENSLAFT00000038055.1">
    <property type="protein sequence ID" value="ENSLAFP00000029495.1"/>
    <property type="gene ID" value="ENSLAFG00000033289.1"/>
</dbReference>
<dbReference type="GeneID" id="808789"/>
<dbReference type="KEGG" id="lav:808789"/>
<dbReference type="CTD" id="4509"/>
<dbReference type="HOGENOM" id="CLU_2830543_0_0_1"/>
<dbReference type="InParanoid" id="Q9TA25"/>
<dbReference type="Proteomes" id="UP000007646">
    <property type="component" value="Unassembled WGS sequence"/>
</dbReference>
<dbReference type="GO" id="GO:0031966">
    <property type="term" value="C:mitochondrial membrane"/>
    <property type="evidence" value="ECO:0007669"/>
    <property type="project" value="UniProtKB-SubCell"/>
</dbReference>
<dbReference type="GO" id="GO:0045259">
    <property type="term" value="C:proton-transporting ATP synthase complex"/>
    <property type="evidence" value="ECO:0000250"/>
    <property type="project" value="UniProtKB"/>
</dbReference>
<dbReference type="GO" id="GO:0006754">
    <property type="term" value="P:ATP biosynthetic process"/>
    <property type="evidence" value="ECO:0007669"/>
    <property type="project" value="UniProtKB-KW"/>
</dbReference>
<dbReference type="GO" id="GO:1902600">
    <property type="term" value="P:proton transmembrane transport"/>
    <property type="evidence" value="ECO:0007669"/>
    <property type="project" value="UniProtKB-KW"/>
</dbReference>
<accession>Q9TA25</accession>
<accession>Q2I3F7</accession>
<proteinExistence type="inferred from homology"/>
<keyword id="KW-0007">Acetylation</keyword>
<keyword id="KW-0066">ATP synthesis</keyword>
<keyword id="KW-0138">CF(0)</keyword>
<keyword id="KW-0375">Hydrogen ion transport</keyword>
<keyword id="KW-0406">Ion transport</keyword>
<keyword id="KW-0472">Membrane</keyword>
<keyword id="KW-0496">Mitochondrion</keyword>
<keyword id="KW-1185">Reference proteome</keyword>
<keyword id="KW-0812">Transmembrane</keyword>
<keyword id="KW-1133">Transmembrane helix</keyword>
<keyword id="KW-0813">Transport</keyword>
<geneLocation type="mitochondrion"/>
<name>ATP8_LOXAF</name>
<feature type="chain" id="PRO_0000195545" description="ATP synthase F(0) complex subunit 8">
    <location>
        <begin position="1"/>
        <end position="66"/>
    </location>
</feature>
<feature type="transmembrane region" description="Helical" evidence="4">
    <location>
        <begin position="8"/>
        <end position="24"/>
    </location>
</feature>
<feature type="modified residue" description="N6-acetyllysine; alternate" evidence="2">
    <location>
        <position position="54"/>
    </location>
</feature>
<feature type="modified residue" description="N6-succinyllysine; alternate" evidence="2">
    <location>
        <position position="54"/>
    </location>
</feature>
<feature type="modified residue" description="N6-acetyllysine" evidence="2">
    <location>
        <position position="57"/>
    </location>
</feature>
<sequence length="66" mass="7893">MERMDIIIWLLAVVIVLTTLMIFLHLKTLKIIRLLFPISKELSKKSCVFPWKKKWTKNYPPSSMYP</sequence>
<reference key="1">
    <citation type="journal article" date="2000" name="Zoology">
        <title>The complete mitochondrial genome sequence of the African elephant (Loxodonta africana), phylogenetic relationships of Proboscidea to other mammals and D-loop heteroplasmy.</title>
        <authorList>
            <person name="Hauf J."/>
            <person name="Waddell P.J."/>
            <person name="Chalwatzis N."/>
            <person name="Joger U."/>
            <person name="Zimmermann F.K."/>
        </authorList>
    </citation>
    <scope>NUCLEOTIDE SEQUENCE [GENOMIC DNA]</scope>
    <source>
        <tissue>Blood</tissue>
    </source>
</reference>
<reference key="2">
    <citation type="journal article" date="2006" name="PLoS Biol.">
        <title>Complete mitochondrial genome and phylogeny of Pleistocene mammoth Mammuthus primigenius.</title>
        <authorList>
            <person name="Rogaev E.I."/>
            <person name="Moliaka Y.K."/>
            <person name="Malyarchuk B.A."/>
            <person name="Kondrashov F.A."/>
            <person name="Derenko M.V."/>
            <person name="Chumakov I."/>
            <person name="Grigorenko A.P."/>
        </authorList>
    </citation>
    <scope>NUCLEOTIDE SEQUENCE [GENOMIC DNA]</scope>
    <source>
        <tissue>Blood</tissue>
    </source>
</reference>